<name>MTNA_SCHPO</name>
<evidence type="ECO:0000255" key="1">
    <source>
        <dbReference type="HAMAP-Rule" id="MF_03119"/>
    </source>
</evidence>
<evidence type="ECO:0000269" key="2">
    <source>
    </source>
</evidence>
<protein>
    <recommendedName>
        <fullName evidence="1">Methylthioribose-1-phosphate isomerase</fullName>
        <shortName evidence="1">M1Pi</shortName>
        <shortName evidence="1">MTR-1-P isomerase</shortName>
        <ecNumber evidence="1">5.3.1.23</ecNumber>
    </recommendedName>
    <alternativeName>
        <fullName evidence="1">S-methyl-5-thioribose-1-phosphate isomerase</fullName>
    </alternativeName>
    <alternativeName>
        <fullName evidence="1">Translation initiation factor eIF-2B subunit alpha/beta/delta-like protein</fullName>
    </alternativeName>
</protein>
<comment type="function">
    <text evidence="1">Catalyzes the interconversion of methylthioribose-1-phosphate (MTR-1-P) into methylthioribulose-1-phosphate (MTRu-1-P).</text>
</comment>
<comment type="catalytic activity">
    <reaction evidence="1">
        <text>5-(methylsulfanyl)-alpha-D-ribose 1-phosphate = 5-(methylsulfanyl)-D-ribulose 1-phosphate</text>
        <dbReference type="Rhea" id="RHEA:19989"/>
        <dbReference type="ChEBI" id="CHEBI:58533"/>
        <dbReference type="ChEBI" id="CHEBI:58548"/>
        <dbReference type="EC" id="5.3.1.23"/>
    </reaction>
</comment>
<comment type="pathway">
    <text evidence="1">Amino-acid biosynthesis; L-methionine biosynthesis via salvage pathway; L-methionine from S-methyl-5-thio-alpha-D-ribose 1-phosphate: step 1/6.</text>
</comment>
<comment type="subcellular location">
    <subcellularLocation>
        <location evidence="1 2">Cytoplasm</location>
    </subcellularLocation>
    <subcellularLocation>
        <location evidence="1 2">Nucleus</location>
    </subcellularLocation>
</comment>
<comment type="similarity">
    <text evidence="1">Belongs to the eIF-2B alpha/beta/delta subunits family. MtnA subfamily.</text>
</comment>
<organism>
    <name type="scientific">Schizosaccharomyces pombe (strain 972 / ATCC 24843)</name>
    <name type="common">Fission yeast</name>
    <dbReference type="NCBI Taxonomy" id="284812"/>
    <lineage>
        <taxon>Eukaryota</taxon>
        <taxon>Fungi</taxon>
        <taxon>Dikarya</taxon>
        <taxon>Ascomycota</taxon>
        <taxon>Taphrinomycotina</taxon>
        <taxon>Schizosaccharomycetes</taxon>
        <taxon>Schizosaccharomycetales</taxon>
        <taxon>Schizosaccharomycetaceae</taxon>
        <taxon>Schizosaccharomyces</taxon>
    </lineage>
</organism>
<feature type="chain" id="PRO_0000317330" description="Methylthioribose-1-phosphate isomerase">
    <location>
        <begin position="1"/>
        <end position="359"/>
    </location>
</feature>
<feature type="active site" description="Proton donor" evidence="1">
    <location>
        <position position="235"/>
    </location>
</feature>
<feature type="site" description="Transition state stabilizer" evidence="1">
    <location>
        <position position="157"/>
    </location>
</feature>
<dbReference type="EC" id="5.3.1.23" evidence="1"/>
<dbReference type="EMBL" id="CU329671">
    <property type="protein sequence ID" value="CAA18878.1"/>
    <property type="molecule type" value="Genomic_DNA"/>
</dbReference>
<dbReference type="PIR" id="T39944">
    <property type="entry name" value="T39944"/>
</dbReference>
<dbReference type="RefSeq" id="NP_596610.1">
    <property type="nucleotide sequence ID" value="NM_001022531.2"/>
</dbReference>
<dbReference type="SMR" id="O60185"/>
<dbReference type="BioGRID" id="277067">
    <property type="interactions" value="11"/>
</dbReference>
<dbReference type="FunCoup" id="O60185">
    <property type="interactions" value="319"/>
</dbReference>
<dbReference type="STRING" id="284812.O60185"/>
<dbReference type="iPTMnet" id="O60185"/>
<dbReference type="PaxDb" id="4896-SPBC23E6.10c.1"/>
<dbReference type="EnsemblFungi" id="SPBC23E6.10c.1">
    <property type="protein sequence ID" value="SPBC23E6.10c.1:pep"/>
    <property type="gene ID" value="SPBC23E6.10c"/>
</dbReference>
<dbReference type="GeneID" id="2540540"/>
<dbReference type="KEGG" id="spo:2540540"/>
<dbReference type="PomBase" id="SPBC23E6.10c">
    <property type="gene designation" value="mri1"/>
</dbReference>
<dbReference type="VEuPathDB" id="FungiDB:SPBC23E6.10c"/>
<dbReference type="eggNOG" id="KOG1468">
    <property type="taxonomic scope" value="Eukaryota"/>
</dbReference>
<dbReference type="HOGENOM" id="CLU_016218_1_3_1"/>
<dbReference type="InParanoid" id="O60185"/>
<dbReference type="OMA" id="CETRPLN"/>
<dbReference type="PhylomeDB" id="O60185"/>
<dbReference type="Reactome" id="R-SPO-1237112">
    <property type="pathway name" value="Methionine salvage pathway"/>
</dbReference>
<dbReference type="UniPathway" id="UPA00904">
    <property type="reaction ID" value="UER00874"/>
</dbReference>
<dbReference type="PRO" id="PR:O60185"/>
<dbReference type="Proteomes" id="UP000002485">
    <property type="component" value="Chromosome II"/>
</dbReference>
<dbReference type="GO" id="GO:0005829">
    <property type="term" value="C:cytosol"/>
    <property type="evidence" value="ECO:0007005"/>
    <property type="project" value="PomBase"/>
</dbReference>
<dbReference type="GO" id="GO:0005634">
    <property type="term" value="C:nucleus"/>
    <property type="evidence" value="ECO:0007005"/>
    <property type="project" value="PomBase"/>
</dbReference>
<dbReference type="GO" id="GO:0046523">
    <property type="term" value="F:S-methyl-5-thioribose-1-phosphate isomerase activity"/>
    <property type="evidence" value="ECO:0000318"/>
    <property type="project" value="GO_Central"/>
</dbReference>
<dbReference type="GO" id="GO:0019509">
    <property type="term" value="P:L-methionine salvage from methylthioadenosine"/>
    <property type="evidence" value="ECO:0000318"/>
    <property type="project" value="GO_Central"/>
</dbReference>
<dbReference type="FunFam" id="1.20.120.420:FF:000003">
    <property type="entry name" value="Methylthioribose-1-phosphate isomerase"/>
    <property type="match status" value="1"/>
</dbReference>
<dbReference type="FunFam" id="3.40.50.10470:FF:000003">
    <property type="entry name" value="Methylthioribose-1-phosphate isomerase"/>
    <property type="match status" value="1"/>
</dbReference>
<dbReference type="Gene3D" id="1.20.120.420">
    <property type="entry name" value="translation initiation factor eif-2b, domain 1"/>
    <property type="match status" value="1"/>
</dbReference>
<dbReference type="Gene3D" id="3.40.50.10470">
    <property type="entry name" value="Translation initiation factor eif-2b, domain 2"/>
    <property type="match status" value="1"/>
</dbReference>
<dbReference type="HAMAP" id="MF_01678">
    <property type="entry name" value="Salvage_MtnA"/>
    <property type="match status" value="1"/>
</dbReference>
<dbReference type="InterPro" id="IPR000649">
    <property type="entry name" value="IF-2B-related"/>
</dbReference>
<dbReference type="InterPro" id="IPR005251">
    <property type="entry name" value="IF-M1Pi"/>
</dbReference>
<dbReference type="InterPro" id="IPR042529">
    <property type="entry name" value="IF_2B-like_C"/>
</dbReference>
<dbReference type="InterPro" id="IPR011559">
    <property type="entry name" value="Initiation_fac_2B_a/b/d"/>
</dbReference>
<dbReference type="InterPro" id="IPR027363">
    <property type="entry name" value="M1Pi_N"/>
</dbReference>
<dbReference type="InterPro" id="IPR037171">
    <property type="entry name" value="NagB/RpiA_transferase-like"/>
</dbReference>
<dbReference type="NCBIfam" id="TIGR00524">
    <property type="entry name" value="eIF-2B_rel"/>
    <property type="match status" value="1"/>
</dbReference>
<dbReference type="NCBIfam" id="NF004326">
    <property type="entry name" value="PRK05720.1"/>
    <property type="match status" value="1"/>
</dbReference>
<dbReference type="NCBIfam" id="TIGR00512">
    <property type="entry name" value="salvage_mtnA"/>
    <property type="match status" value="1"/>
</dbReference>
<dbReference type="PANTHER" id="PTHR43475">
    <property type="entry name" value="METHYLTHIORIBOSE-1-PHOSPHATE ISOMERASE"/>
    <property type="match status" value="1"/>
</dbReference>
<dbReference type="PANTHER" id="PTHR43475:SF1">
    <property type="entry name" value="METHYLTHIORIBOSE-1-PHOSPHATE ISOMERASE"/>
    <property type="match status" value="1"/>
</dbReference>
<dbReference type="Pfam" id="PF01008">
    <property type="entry name" value="IF-2B"/>
    <property type="match status" value="1"/>
</dbReference>
<dbReference type="SUPFAM" id="SSF100950">
    <property type="entry name" value="NagB/RpiA/CoA transferase-like"/>
    <property type="match status" value="1"/>
</dbReference>
<proteinExistence type="inferred from homology"/>
<sequence>MSLQAIIYNEDKLLVLDQLLLPYERKYISVSNVEDAFAVIKKMQVRGAPAIAIVAALSVAVGLKHLSEDADAKEYVINSFEHLKQSRPTAVNLFETAKFMQGIALQEGKNCRNKIIQEAERMLVKDLEDNHNIGTAGRKFLLQHYKDKDKLTVLTHCNTGSLATSGYGTALGIIRSLHESGNLEHAYCTETRPYNQGSRLTAFELVHDKIPATLVTDSTVASIMHKIDAIVVGADRVTRNGDTANKIGTYNLAILAKHFGKPFIVAAPFSSIDTSLASGSQITIEQRPPIEMTTITGPIITDSNSRNLEDPKRVRISIAAPGIDVYSPAFDVTPANLITAIATEKGFYTQQTNNKYDFS</sequence>
<gene>
    <name type="primary">mri1</name>
    <name type="ORF">SPBC23E6.10c</name>
</gene>
<keyword id="KW-0028">Amino-acid biosynthesis</keyword>
<keyword id="KW-0963">Cytoplasm</keyword>
<keyword id="KW-0413">Isomerase</keyword>
<keyword id="KW-0486">Methionine biosynthesis</keyword>
<keyword id="KW-0539">Nucleus</keyword>
<keyword id="KW-1185">Reference proteome</keyword>
<accession>O60185</accession>
<reference key="1">
    <citation type="journal article" date="2002" name="Nature">
        <title>The genome sequence of Schizosaccharomyces pombe.</title>
        <authorList>
            <person name="Wood V."/>
            <person name="Gwilliam R."/>
            <person name="Rajandream M.A."/>
            <person name="Lyne M.H."/>
            <person name="Lyne R."/>
            <person name="Stewart A."/>
            <person name="Sgouros J.G."/>
            <person name="Peat N."/>
            <person name="Hayles J."/>
            <person name="Baker S.G."/>
            <person name="Basham D."/>
            <person name="Bowman S."/>
            <person name="Brooks K."/>
            <person name="Brown D."/>
            <person name="Brown S."/>
            <person name="Chillingworth T."/>
            <person name="Churcher C.M."/>
            <person name="Collins M."/>
            <person name="Connor R."/>
            <person name="Cronin A."/>
            <person name="Davis P."/>
            <person name="Feltwell T."/>
            <person name="Fraser A."/>
            <person name="Gentles S."/>
            <person name="Goble A."/>
            <person name="Hamlin N."/>
            <person name="Harris D.E."/>
            <person name="Hidalgo J."/>
            <person name="Hodgson G."/>
            <person name="Holroyd S."/>
            <person name="Hornsby T."/>
            <person name="Howarth S."/>
            <person name="Huckle E.J."/>
            <person name="Hunt S."/>
            <person name="Jagels K."/>
            <person name="James K.D."/>
            <person name="Jones L."/>
            <person name="Jones M."/>
            <person name="Leather S."/>
            <person name="McDonald S."/>
            <person name="McLean J."/>
            <person name="Mooney P."/>
            <person name="Moule S."/>
            <person name="Mungall K.L."/>
            <person name="Murphy L.D."/>
            <person name="Niblett D."/>
            <person name="Odell C."/>
            <person name="Oliver K."/>
            <person name="O'Neil S."/>
            <person name="Pearson D."/>
            <person name="Quail M.A."/>
            <person name="Rabbinowitsch E."/>
            <person name="Rutherford K.M."/>
            <person name="Rutter S."/>
            <person name="Saunders D."/>
            <person name="Seeger K."/>
            <person name="Sharp S."/>
            <person name="Skelton J."/>
            <person name="Simmonds M.N."/>
            <person name="Squares R."/>
            <person name="Squares S."/>
            <person name="Stevens K."/>
            <person name="Taylor K."/>
            <person name="Taylor R.G."/>
            <person name="Tivey A."/>
            <person name="Walsh S.V."/>
            <person name="Warren T."/>
            <person name="Whitehead S."/>
            <person name="Woodward J.R."/>
            <person name="Volckaert G."/>
            <person name="Aert R."/>
            <person name="Robben J."/>
            <person name="Grymonprez B."/>
            <person name="Weltjens I."/>
            <person name="Vanstreels E."/>
            <person name="Rieger M."/>
            <person name="Schaefer M."/>
            <person name="Mueller-Auer S."/>
            <person name="Gabel C."/>
            <person name="Fuchs M."/>
            <person name="Duesterhoeft A."/>
            <person name="Fritzc C."/>
            <person name="Holzer E."/>
            <person name="Moestl D."/>
            <person name="Hilbert H."/>
            <person name="Borzym K."/>
            <person name="Langer I."/>
            <person name="Beck A."/>
            <person name="Lehrach H."/>
            <person name="Reinhardt R."/>
            <person name="Pohl T.M."/>
            <person name="Eger P."/>
            <person name="Zimmermann W."/>
            <person name="Wedler H."/>
            <person name="Wambutt R."/>
            <person name="Purnelle B."/>
            <person name="Goffeau A."/>
            <person name="Cadieu E."/>
            <person name="Dreano S."/>
            <person name="Gloux S."/>
            <person name="Lelaure V."/>
            <person name="Mottier S."/>
            <person name="Galibert F."/>
            <person name="Aves S.J."/>
            <person name="Xiang Z."/>
            <person name="Hunt C."/>
            <person name="Moore K."/>
            <person name="Hurst S.M."/>
            <person name="Lucas M."/>
            <person name="Rochet M."/>
            <person name="Gaillardin C."/>
            <person name="Tallada V.A."/>
            <person name="Garzon A."/>
            <person name="Thode G."/>
            <person name="Daga R.R."/>
            <person name="Cruzado L."/>
            <person name="Jimenez J."/>
            <person name="Sanchez M."/>
            <person name="del Rey F."/>
            <person name="Benito J."/>
            <person name="Dominguez A."/>
            <person name="Revuelta J.L."/>
            <person name="Moreno S."/>
            <person name="Armstrong J."/>
            <person name="Forsburg S.L."/>
            <person name="Cerutti L."/>
            <person name="Lowe T."/>
            <person name="McCombie W.R."/>
            <person name="Paulsen I."/>
            <person name="Potashkin J."/>
            <person name="Shpakovski G.V."/>
            <person name="Ussery D."/>
            <person name="Barrell B.G."/>
            <person name="Nurse P."/>
        </authorList>
    </citation>
    <scope>NUCLEOTIDE SEQUENCE [LARGE SCALE GENOMIC DNA]</scope>
    <source>
        <strain>972 / ATCC 24843</strain>
    </source>
</reference>
<reference key="2">
    <citation type="journal article" date="2006" name="Nat. Biotechnol.">
        <title>ORFeome cloning and global analysis of protein localization in the fission yeast Schizosaccharomyces pombe.</title>
        <authorList>
            <person name="Matsuyama A."/>
            <person name="Arai R."/>
            <person name="Yashiroda Y."/>
            <person name="Shirai A."/>
            <person name="Kamata A."/>
            <person name="Sekido S."/>
            <person name="Kobayashi Y."/>
            <person name="Hashimoto A."/>
            <person name="Hamamoto M."/>
            <person name="Hiraoka Y."/>
            <person name="Horinouchi S."/>
            <person name="Yoshida M."/>
        </authorList>
    </citation>
    <scope>SUBCELLULAR LOCATION [LARGE SCALE ANALYSIS]</scope>
</reference>